<reference key="1">
    <citation type="journal article" date="2004" name="FEBS Lett.">
        <title>Identification and characterization of a novel Rho GTPase activating protein implicated in receptor-mediated endocytosis.</title>
        <authorList>
            <person name="Sakakibara T."/>
            <person name="Nemoto Y."/>
            <person name="Nukiwa T."/>
            <person name="Takeshima H."/>
        </authorList>
    </citation>
    <scope>NUCLEOTIDE SEQUENCE [MRNA]</scope>
    <scope>FUNCTION</scope>
    <scope>SUBCELLULAR LOCATION</scope>
    <scope>INTERACTION WITH SH3KBP1</scope>
    <source>
        <strain>Sprague-Dawley</strain>
    </source>
</reference>
<reference key="2">
    <citation type="journal article" date="2012" name="Nat. Commun.">
        <title>Quantitative maps of protein phosphorylation sites across 14 different rat organs and tissues.</title>
        <authorList>
            <person name="Lundby A."/>
            <person name="Secher A."/>
            <person name="Lage K."/>
            <person name="Nordsborg N.B."/>
            <person name="Dmytriyev A."/>
            <person name="Lundby C."/>
            <person name="Olsen J.V."/>
        </authorList>
    </citation>
    <scope>PHOSPHORYLATION [LARGE SCALE ANALYSIS] AT SER-155 AND SER-632</scope>
    <scope>IDENTIFICATION BY MASS SPECTROMETRY [LARGE SCALE ANALYSIS]</scope>
</reference>
<feature type="chain" id="PRO_0000317580" description="Rho GTPase-activating protein 27">
    <location>
        <begin position="1"/>
        <end position="869"/>
    </location>
</feature>
<feature type="domain" description="SH3" evidence="5">
    <location>
        <begin position="6"/>
        <end position="69"/>
    </location>
</feature>
<feature type="domain" description="WW 1" evidence="6">
    <location>
        <begin position="246"/>
        <end position="280"/>
    </location>
</feature>
<feature type="domain" description="WW 2" evidence="6">
    <location>
        <begin position="299"/>
        <end position="333"/>
    </location>
</feature>
<feature type="domain" description="WW 3" evidence="6">
    <location>
        <begin position="414"/>
        <end position="447"/>
    </location>
</feature>
<feature type="domain" description="PH" evidence="3">
    <location>
        <begin position="477"/>
        <end position="593"/>
    </location>
</feature>
<feature type="domain" description="Rho-GAP" evidence="4">
    <location>
        <begin position="677"/>
        <end position="866"/>
    </location>
</feature>
<feature type="region of interest" description="Disordered" evidence="7">
    <location>
        <begin position="104"/>
        <end position="137"/>
    </location>
</feature>
<feature type="region of interest" description="Disordered" evidence="7">
    <location>
        <begin position="275"/>
        <end position="299"/>
    </location>
</feature>
<feature type="region of interest" description="Disordered" evidence="7">
    <location>
        <begin position="331"/>
        <end position="389"/>
    </location>
</feature>
<feature type="region of interest" description="Disordered" evidence="7">
    <location>
        <begin position="447"/>
        <end position="474"/>
    </location>
</feature>
<feature type="region of interest" description="Disordered" evidence="7">
    <location>
        <begin position="598"/>
        <end position="644"/>
    </location>
</feature>
<feature type="compositionally biased region" description="Acidic residues" evidence="7">
    <location>
        <begin position="331"/>
        <end position="343"/>
    </location>
</feature>
<feature type="compositionally biased region" description="Polar residues" evidence="7">
    <location>
        <begin position="345"/>
        <end position="356"/>
    </location>
</feature>
<feature type="compositionally biased region" description="Polar residues" evidence="7">
    <location>
        <begin position="631"/>
        <end position="642"/>
    </location>
</feature>
<feature type="site" description="Arginine finger; crucial for GTP hydrolysis by stabilizing the transition state" evidence="4">
    <location>
        <position position="713"/>
    </location>
</feature>
<feature type="modified residue" description="Phosphoserine" evidence="9">
    <location>
        <position position="155"/>
    </location>
</feature>
<feature type="modified residue" description="Phosphoserine" evidence="1">
    <location>
        <position position="215"/>
    </location>
</feature>
<feature type="modified residue" description="Phosphoserine" evidence="2">
    <location>
        <position position="249"/>
    </location>
</feature>
<feature type="modified residue" description="Phosphoserine" evidence="1">
    <location>
        <position position="350"/>
    </location>
</feature>
<feature type="modified residue" description="Phosphoserine" evidence="1">
    <location>
        <position position="459"/>
    </location>
</feature>
<feature type="modified residue" description="Phosphoserine" evidence="1">
    <location>
        <position position="462"/>
    </location>
</feature>
<feature type="modified residue" description="Phosphothreonine" evidence="1">
    <location>
        <position position="464"/>
    </location>
</feature>
<feature type="modified residue" description="Phosphoserine" evidence="2">
    <location>
        <position position="469"/>
    </location>
</feature>
<feature type="modified residue" description="Phosphoserine" evidence="9">
    <location>
        <position position="632"/>
    </location>
</feature>
<proteinExistence type="evidence at protein level"/>
<keyword id="KW-0963">Cytoplasm</keyword>
<keyword id="KW-0254">Endocytosis</keyword>
<keyword id="KW-0343">GTPase activation</keyword>
<keyword id="KW-0472">Membrane</keyword>
<keyword id="KW-0597">Phosphoprotein</keyword>
<keyword id="KW-1185">Reference proteome</keyword>
<keyword id="KW-0677">Repeat</keyword>
<keyword id="KW-0728">SH3 domain</keyword>
<organism>
    <name type="scientific">Rattus norvegicus</name>
    <name type="common">Rat</name>
    <dbReference type="NCBI Taxonomy" id="10116"/>
    <lineage>
        <taxon>Eukaryota</taxon>
        <taxon>Metazoa</taxon>
        <taxon>Chordata</taxon>
        <taxon>Craniata</taxon>
        <taxon>Vertebrata</taxon>
        <taxon>Euteleostomi</taxon>
        <taxon>Mammalia</taxon>
        <taxon>Eutheria</taxon>
        <taxon>Euarchontoglires</taxon>
        <taxon>Glires</taxon>
        <taxon>Rodentia</taxon>
        <taxon>Myomorpha</taxon>
        <taxon>Muroidea</taxon>
        <taxon>Muridae</taxon>
        <taxon>Murinae</taxon>
        <taxon>Rattus</taxon>
    </lineage>
</organism>
<protein>
    <recommendedName>
        <fullName>Rho GTPase-activating protein 27</fullName>
    </recommendedName>
    <alternativeName>
        <fullName>CIN85-associated multi-domain-containing Rho GTPase-activating protein 1</fullName>
    </alternativeName>
    <alternativeName>
        <fullName>Rho-type GTPase-activating protein 27</fullName>
    </alternativeName>
</protein>
<dbReference type="EMBL" id="AY394725">
    <property type="protein sequence ID" value="AAQ94494.1"/>
    <property type="molecule type" value="mRNA"/>
</dbReference>
<dbReference type="RefSeq" id="NP_942054.1">
    <property type="nucleotide sequence ID" value="NM_198759.1"/>
</dbReference>
<dbReference type="SMR" id="Q6TLK4"/>
<dbReference type="FunCoup" id="Q6TLK4">
    <property type="interactions" value="142"/>
</dbReference>
<dbReference type="STRING" id="10116.ENSRNOP00000034607"/>
<dbReference type="GlyGen" id="Q6TLK4">
    <property type="glycosylation" value="1 site"/>
</dbReference>
<dbReference type="iPTMnet" id="Q6TLK4"/>
<dbReference type="PhosphoSitePlus" id="Q6TLK4"/>
<dbReference type="PaxDb" id="10116-ENSRNOP00000034607"/>
<dbReference type="GeneID" id="303583"/>
<dbReference type="KEGG" id="rno:303583"/>
<dbReference type="AGR" id="RGD:735202"/>
<dbReference type="CTD" id="201176"/>
<dbReference type="RGD" id="735202">
    <property type="gene designation" value="Arhgap27"/>
</dbReference>
<dbReference type="eggNOG" id="KOG1450">
    <property type="taxonomic scope" value="Eukaryota"/>
</dbReference>
<dbReference type="eggNOG" id="KOG4269">
    <property type="taxonomic scope" value="Eukaryota"/>
</dbReference>
<dbReference type="InParanoid" id="Q6TLK4"/>
<dbReference type="OrthoDB" id="79452at2759"/>
<dbReference type="PhylomeDB" id="Q6TLK4"/>
<dbReference type="Reactome" id="R-RNO-9013148">
    <property type="pathway name" value="CDC42 GTPase cycle"/>
</dbReference>
<dbReference type="Reactome" id="R-RNO-9013149">
    <property type="pathway name" value="RAC1 GTPase cycle"/>
</dbReference>
<dbReference type="PRO" id="PR:Q6TLK4"/>
<dbReference type="Proteomes" id="UP000002494">
    <property type="component" value="Unplaced"/>
</dbReference>
<dbReference type="GO" id="GO:0005737">
    <property type="term" value="C:cytoplasm"/>
    <property type="evidence" value="ECO:0000318"/>
    <property type="project" value="GO_Central"/>
</dbReference>
<dbReference type="GO" id="GO:0005768">
    <property type="term" value="C:endosome"/>
    <property type="evidence" value="ECO:0000314"/>
    <property type="project" value="MGI"/>
</dbReference>
<dbReference type="GO" id="GO:0005886">
    <property type="term" value="C:plasma membrane"/>
    <property type="evidence" value="ECO:0000318"/>
    <property type="project" value="GO_Central"/>
</dbReference>
<dbReference type="GO" id="GO:0005096">
    <property type="term" value="F:GTPase activator activity"/>
    <property type="evidence" value="ECO:0000314"/>
    <property type="project" value="HGNC-UCL"/>
</dbReference>
<dbReference type="GO" id="GO:0017124">
    <property type="term" value="F:SH3 domain binding"/>
    <property type="evidence" value="ECO:0000314"/>
    <property type="project" value="HGNC-UCL"/>
</dbReference>
<dbReference type="GO" id="GO:0006898">
    <property type="term" value="P:receptor-mediated endocytosis"/>
    <property type="evidence" value="ECO:0000314"/>
    <property type="project" value="MGI"/>
</dbReference>
<dbReference type="GO" id="GO:0007266">
    <property type="term" value="P:Rho protein signal transduction"/>
    <property type="evidence" value="ECO:0000314"/>
    <property type="project" value="HGNC-UCL"/>
</dbReference>
<dbReference type="GO" id="GO:0007264">
    <property type="term" value="P:small GTPase-mediated signal transduction"/>
    <property type="evidence" value="ECO:0000318"/>
    <property type="project" value="GO_Central"/>
</dbReference>
<dbReference type="CDD" id="cd13233">
    <property type="entry name" value="PH_ARHGAP9-like"/>
    <property type="match status" value="1"/>
</dbReference>
<dbReference type="CDD" id="cd04403">
    <property type="entry name" value="RhoGAP_ARHGAP27_15_12_9"/>
    <property type="match status" value="1"/>
</dbReference>
<dbReference type="CDD" id="cd00201">
    <property type="entry name" value="WW"/>
    <property type="match status" value="3"/>
</dbReference>
<dbReference type="FunFam" id="1.10.555.10:FF:000003">
    <property type="entry name" value="Putative rho GTPase-activating protein 12"/>
    <property type="match status" value="1"/>
</dbReference>
<dbReference type="FunFam" id="2.20.70.10:FF:000061">
    <property type="entry name" value="Rho GTPase activating protein 27"/>
    <property type="match status" value="1"/>
</dbReference>
<dbReference type="FunFam" id="2.20.70.10:FF:000065">
    <property type="entry name" value="Rho GTPase activating protein 27"/>
    <property type="match status" value="1"/>
</dbReference>
<dbReference type="FunFam" id="2.30.29.30:FF:000206">
    <property type="entry name" value="Rho GTPase activating protein 27"/>
    <property type="match status" value="1"/>
</dbReference>
<dbReference type="Gene3D" id="2.20.70.10">
    <property type="match status" value="2"/>
</dbReference>
<dbReference type="Gene3D" id="2.30.29.30">
    <property type="entry name" value="Pleckstrin-homology domain (PH domain)/Phosphotyrosine-binding domain (PTB)"/>
    <property type="match status" value="1"/>
</dbReference>
<dbReference type="Gene3D" id="1.10.555.10">
    <property type="entry name" value="Rho GTPase activation protein"/>
    <property type="match status" value="1"/>
</dbReference>
<dbReference type="Gene3D" id="2.30.30.40">
    <property type="entry name" value="SH3 Domains"/>
    <property type="match status" value="1"/>
</dbReference>
<dbReference type="InterPro" id="IPR011993">
    <property type="entry name" value="PH-like_dom_sf"/>
</dbReference>
<dbReference type="InterPro" id="IPR001849">
    <property type="entry name" value="PH_domain"/>
</dbReference>
<dbReference type="InterPro" id="IPR050729">
    <property type="entry name" value="Rho-GAP"/>
</dbReference>
<dbReference type="InterPro" id="IPR008936">
    <property type="entry name" value="Rho_GTPase_activation_prot"/>
</dbReference>
<dbReference type="InterPro" id="IPR000198">
    <property type="entry name" value="RhoGAP_dom"/>
</dbReference>
<dbReference type="InterPro" id="IPR036028">
    <property type="entry name" value="SH3-like_dom_sf"/>
</dbReference>
<dbReference type="InterPro" id="IPR001452">
    <property type="entry name" value="SH3_domain"/>
</dbReference>
<dbReference type="InterPro" id="IPR001202">
    <property type="entry name" value="WW_dom"/>
</dbReference>
<dbReference type="InterPro" id="IPR036020">
    <property type="entry name" value="WW_dom_sf"/>
</dbReference>
<dbReference type="PANTHER" id="PTHR23176:SF104">
    <property type="entry name" value="RHO GTPASE-ACTIVATING PROTEIN 27"/>
    <property type="match status" value="1"/>
</dbReference>
<dbReference type="PANTHER" id="PTHR23176">
    <property type="entry name" value="RHO/RAC/CDC GTPASE-ACTIVATING PROTEIN"/>
    <property type="match status" value="1"/>
</dbReference>
<dbReference type="Pfam" id="PF00169">
    <property type="entry name" value="PH"/>
    <property type="match status" value="1"/>
</dbReference>
<dbReference type="Pfam" id="PF00620">
    <property type="entry name" value="RhoGAP"/>
    <property type="match status" value="1"/>
</dbReference>
<dbReference type="Pfam" id="PF00397">
    <property type="entry name" value="WW"/>
    <property type="match status" value="2"/>
</dbReference>
<dbReference type="SMART" id="SM00233">
    <property type="entry name" value="PH"/>
    <property type="match status" value="1"/>
</dbReference>
<dbReference type="SMART" id="SM00324">
    <property type="entry name" value="RhoGAP"/>
    <property type="match status" value="1"/>
</dbReference>
<dbReference type="SMART" id="SM00456">
    <property type="entry name" value="WW"/>
    <property type="match status" value="3"/>
</dbReference>
<dbReference type="SUPFAM" id="SSF48350">
    <property type="entry name" value="GTPase activation domain, GAP"/>
    <property type="match status" value="1"/>
</dbReference>
<dbReference type="SUPFAM" id="SSF50729">
    <property type="entry name" value="PH domain-like"/>
    <property type="match status" value="1"/>
</dbReference>
<dbReference type="SUPFAM" id="SSF50044">
    <property type="entry name" value="SH3-domain"/>
    <property type="match status" value="1"/>
</dbReference>
<dbReference type="SUPFAM" id="SSF51045">
    <property type="entry name" value="WW domain"/>
    <property type="match status" value="3"/>
</dbReference>
<dbReference type="PROSITE" id="PS50003">
    <property type="entry name" value="PH_DOMAIN"/>
    <property type="match status" value="1"/>
</dbReference>
<dbReference type="PROSITE" id="PS50238">
    <property type="entry name" value="RHOGAP"/>
    <property type="match status" value="1"/>
</dbReference>
<dbReference type="PROSITE" id="PS50002">
    <property type="entry name" value="SH3"/>
    <property type="match status" value="1"/>
</dbReference>
<dbReference type="PROSITE" id="PS50020">
    <property type="entry name" value="WW_DOMAIN_2"/>
    <property type="match status" value="3"/>
</dbReference>
<comment type="function">
    <text evidence="8">Rho GTPase-activating protein which may be involved in clathrin-mediated endocytosis. GTPase activators for the Rho-type GTPases act by converting them to an inactive GDP-bound state. Has activity toward CDC42 and RAC1.</text>
</comment>
<comment type="subunit">
    <text evidence="8">Interacts with SH3KBP1/CIN85.</text>
</comment>
<comment type="subcellular location">
    <subcellularLocation>
        <location evidence="8">Cytoplasm</location>
    </subcellularLocation>
    <subcellularLocation>
        <location evidence="8">Membrane</location>
        <topology evidence="8">Peripheral membrane protein</topology>
    </subcellularLocation>
</comment>
<evidence type="ECO:0000250" key="1">
    <source>
        <dbReference type="UniProtKB" id="A2AB59"/>
    </source>
</evidence>
<evidence type="ECO:0000250" key="2">
    <source>
        <dbReference type="UniProtKB" id="Q6ZUM4"/>
    </source>
</evidence>
<evidence type="ECO:0000255" key="3">
    <source>
        <dbReference type="PROSITE-ProRule" id="PRU00145"/>
    </source>
</evidence>
<evidence type="ECO:0000255" key="4">
    <source>
        <dbReference type="PROSITE-ProRule" id="PRU00172"/>
    </source>
</evidence>
<evidence type="ECO:0000255" key="5">
    <source>
        <dbReference type="PROSITE-ProRule" id="PRU00192"/>
    </source>
</evidence>
<evidence type="ECO:0000255" key="6">
    <source>
        <dbReference type="PROSITE-ProRule" id="PRU00224"/>
    </source>
</evidence>
<evidence type="ECO:0000256" key="7">
    <source>
        <dbReference type="SAM" id="MobiDB-lite"/>
    </source>
</evidence>
<evidence type="ECO:0000269" key="8">
    <source>
    </source>
</evidence>
<evidence type="ECO:0007744" key="9">
    <source>
    </source>
</evidence>
<accession>Q6TLK4</accession>
<sequence>MAADVEGDVYVLVEHPFEYTGKDGRLIAIQPNERCRLLRRSTEHWWHVRREPGGRPFYLPAQYVRELPALGDPVPAPQPSVLQQRPTVPEPLAYDYRFVSTPVGADGSSAEPRGRASSLCGPARQRTSGQRNSLAPGGPACLYLRPAAPVRPAQSLDDLARGGTAPPAGLLGSAGHFKASSVAGSWVCPRPLARSDSENVYEAIPDLRCPPRAKSPKQVDEPPEPVYANVERQPQVTSPRSAAAPPRLSPVWETHTDAGTGRPYYYNPDTGVTTWESPFEAPEGATSPTTSRASVGSGESLETEWGQYWDEESGRVFFYNPLTGETVWEDETEELEDDPEEQLEMQPSLSPRSPGQQRPPTPETDYPELLTSYPEEDYSPVGSFSDLGPTSPLVAPPGWSCQITPEKQMLYTNQFTQEQWVRLEDQEGKPYFYNPEDSSVQWELPQVPVPAPRSGRKSSQDSDTPAQASPPEEKIKTLDKAGVLHRTKTVDKGKRLRKKHWNASWTVLEGGVLTFFKDSKTSAASGLRQPSKLSTPEYTVELRGASLSWAPKDKSSKKNVLELRSRDGSEYLIQHDSEAIISTWHKAIAEGIEELSADLPQREEGEPSSADFGSSERLGSWKEEDVRPNAASPSLNPGSQESDLSRVRHKLRKFLQRRPTLQSLREKGYIKDQVFGCALAQLCERERSPVPRFVQQCIRTVEARGLDIDGLYRISGNLATIQKLRYKVDHDERLDLDDGRWEDVHVITGALKLFFRELPEPLFPFSHFHQFIAAIKLQDPAQRSRCVRDLVRTLPAPNHDTLRLLIQHLCRVIEHGEQNRMSVQNVAIVFGPTLLRPEMEEASMPMTMVFQNQVVELILHQCADIFPPH</sequence>
<name>RHG27_RAT</name>
<gene>
    <name type="primary">Arhgap27</name>
    <name type="synonym">Camgap1</name>
</gene>